<gene>
    <name evidence="1" type="primary">rpmE</name>
    <name evidence="1" type="synonym">rpl31</name>
    <name type="ordered locus">tsr0110</name>
</gene>
<comment type="function">
    <text evidence="1">Binds the 23S rRNA.</text>
</comment>
<comment type="subunit">
    <text evidence="1">Part of the 50S ribosomal subunit.</text>
</comment>
<comment type="similarity">
    <text evidence="1">Belongs to the bacterial ribosomal protein bL31 family. Type A subfamily.</text>
</comment>
<reference key="1">
    <citation type="journal article" date="2002" name="DNA Res.">
        <title>Complete genome structure of the thermophilic cyanobacterium Thermosynechococcus elongatus BP-1.</title>
        <authorList>
            <person name="Nakamura Y."/>
            <person name="Kaneko T."/>
            <person name="Sato S."/>
            <person name="Ikeuchi M."/>
            <person name="Katoh H."/>
            <person name="Sasamoto S."/>
            <person name="Watanabe A."/>
            <person name="Iriguchi M."/>
            <person name="Kawashima K."/>
            <person name="Kimura T."/>
            <person name="Kishida Y."/>
            <person name="Kiyokawa C."/>
            <person name="Kohara M."/>
            <person name="Matsumoto M."/>
            <person name="Matsuno A."/>
            <person name="Nakazaki N."/>
            <person name="Shimpo S."/>
            <person name="Sugimoto M."/>
            <person name="Takeuchi C."/>
            <person name="Yamada M."/>
            <person name="Tabata S."/>
        </authorList>
    </citation>
    <scope>NUCLEOTIDE SEQUENCE [LARGE SCALE GENOMIC DNA]</scope>
    <source>
        <strain>NIES-2133 / IAM M-273 / BP-1</strain>
    </source>
</reference>
<feature type="chain" id="PRO_0000173165" description="Large ribosomal subunit protein bL31">
    <location>
        <begin position="1"/>
        <end position="91"/>
    </location>
</feature>
<feature type="region of interest" description="Disordered" evidence="2">
    <location>
        <begin position="62"/>
        <end position="91"/>
    </location>
</feature>
<name>RL31_THEVB</name>
<organism>
    <name type="scientific">Thermosynechococcus vestitus (strain NIES-2133 / IAM M-273 / BP-1)</name>
    <dbReference type="NCBI Taxonomy" id="197221"/>
    <lineage>
        <taxon>Bacteria</taxon>
        <taxon>Bacillati</taxon>
        <taxon>Cyanobacteriota</taxon>
        <taxon>Cyanophyceae</taxon>
        <taxon>Acaryochloridales</taxon>
        <taxon>Thermosynechococcaceae</taxon>
        <taxon>Thermosynechococcus</taxon>
    </lineage>
</organism>
<evidence type="ECO:0000255" key="1">
    <source>
        <dbReference type="HAMAP-Rule" id="MF_00501"/>
    </source>
</evidence>
<evidence type="ECO:0000256" key="2">
    <source>
        <dbReference type="SAM" id="MobiDB-lite"/>
    </source>
</evidence>
<evidence type="ECO:0000305" key="3"/>
<keyword id="KW-1185">Reference proteome</keyword>
<keyword id="KW-0687">Ribonucleoprotein</keyword>
<keyword id="KW-0689">Ribosomal protein</keyword>
<keyword id="KW-0694">RNA-binding</keyword>
<keyword id="KW-0699">rRNA-binding</keyword>
<accession>Q8DMK6</accession>
<proteinExistence type="inferred from homology"/>
<protein>
    <recommendedName>
        <fullName evidence="1">Large ribosomal subunit protein bL31</fullName>
    </recommendedName>
    <alternativeName>
        <fullName evidence="3">50S ribosomal protein L31</fullName>
    </alternativeName>
</protein>
<dbReference type="EMBL" id="BA000039">
    <property type="protein sequence ID" value="BAC07663.1"/>
    <property type="molecule type" value="Genomic_DNA"/>
</dbReference>
<dbReference type="RefSeq" id="NP_680901.1">
    <property type="nucleotide sequence ID" value="NC_004113.1"/>
</dbReference>
<dbReference type="RefSeq" id="WP_011055965.1">
    <property type="nucleotide sequence ID" value="NC_004113.1"/>
</dbReference>
<dbReference type="STRING" id="197221.gene:10746688"/>
<dbReference type="EnsemblBacteria" id="BAC07663">
    <property type="protein sequence ID" value="BAC07663"/>
    <property type="gene ID" value="BAC07663"/>
</dbReference>
<dbReference type="KEGG" id="tel:tsr0110"/>
<dbReference type="PATRIC" id="fig|197221.4.peg.113"/>
<dbReference type="eggNOG" id="COG0254">
    <property type="taxonomic scope" value="Bacteria"/>
</dbReference>
<dbReference type="Proteomes" id="UP000000440">
    <property type="component" value="Chromosome"/>
</dbReference>
<dbReference type="GO" id="GO:1990904">
    <property type="term" value="C:ribonucleoprotein complex"/>
    <property type="evidence" value="ECO:0007669"/>
    <property type="project" value="UniProtKB-KW"/>
</dbReference>
<dbReference type="GO" id="GO:0005840">
    <property type="term" value="C:ribosome"/>
    <property type="evidence" value="ECO:0007669"/>
    <property type="project" value="UniProtKB-KW"/>
</dbReference>
<dbReference type="GO" id="GO:0019843">
    <property type="term" value="F:rRNA binding"/>
    <property type="evidence" value="ECO:0007669"/>
    <property type="project" value="UniProtKB-KW"/>
</dbReference>
<dbReference type="GO" id="GO:0003735">
    <property type="term" value="F:structural constituent of ribosome"/>
    <property type="evidence" value="ECO:0007669"/>
    <property type="project" value="InterPro"/>
</dbReference>
<dbReference type="GO" id="GO:0006412">
    <property type="term" value="P:translation"/>
    <property type="evidence" value="ECO:0007669"/>
    <property type="project" value="UniProtKB-UniRule"/>
</dbReference>
<dbReference type="Gene3D" id="4.10.830.30">
    <property type="entry name" value="Ribosomal protein L31"/>
    <property type="match status" value="1"/>
</dbReference>
<dbReference type="HAMAP" id="MF_00501">
    <property type="entry name" value="Ribosomal_bL31_1"/>
    <property type="match status" value="1"/>
</dbReference>
<dbReference type="InterPro" id="IPR034704">
    <property type="entry name" value="Ribosomal_bL28/bL31-like_sf"/>
</dbReference>
<dbReference type="InterPro" id="IPR002150">
    <property type="entry name" value="Ribosomal_bL31"/>
</dbReference>
<dbReference type="InterPro" id="IPR027491">
    <property type="entry name" value="Ribosomal_bL31_A"/>
</dbReference>
<dbReference type="InterPro" id="IPR042105">
    <property type="entry name" value="Ribosomal_bL31_sf"/>
</dbReference>
<dbReference type="NCBIfam" id="TIGR00105">
    <property type="entry name" value="L31"/>
    <property type="match status" value="1"/>
</dbReference>
<dbReference type="NCBIfam" id="NF001809">
    <property type="entry name" value="PRK00528.1"/>
    <property type="match status" value="1"/>
</dbReference>
<dbReference type="PANTHER" id="PTHR33280">
    <property type="entry name" value="50S RIBOSOMAL PROTEIN L31, CHLOROPLASTIC"/>
    <property type="match status" value="1"/>
</dbReference>
<dbReference type="PANTHER" id="PTHR33280:SF1">
    <property type="entry name" value="LARGE RIBOSOMAL SUBUNIT PROTEIN BL31C"/>
    <property type="match status" value="1"/>
</dbReference>
<dbReference type="Pfam" id="PF01197">
    <property type="entry name" value="Ribosomal_L31"/>
    <property type="match status" value="1"/>
</dbReference>
<dbReference type="PRINTS" id="PR01249">
    <property type="entry name" value="RIBOSOMALL31"/>
</dbReference>
<dbReference type="SUPFAM" id="SSF143800">
    <property type="entry name" value="L28p-like"/>
    <property type="match status" value="1"/>
</dbReference>
<dbReference type="PROSITE" id="PS01143">
    <property type="entry name" value="RIBOSOMAL_L31"/>
    <property type="match status" value="1"/>
</dbReference>
<sequence length="91" mass="10239">MPKPNIHPQWYPEAKVYCDGEVIMTVGSTKPELHVDIWSGNHPFFTGTQKIVDAEGRVERFRRKYSGTKPQQTAKGKKAAPKSTPKTNKKG</sequence>